<keyword id="KW-0963">Cytoplasm</keyword>
<keyword id="KW-0251">Elongation factor</keyword>
<keyword id="KW-0342">GTP-binding</keyword>
<keyword id="KW-0547">Nucleotide-binding</keyword>
<keyword id="KW-0648">Protein biosynthesis</keyword>
<name>EFG_YERP3</name>
<feature type="chain" id="PRO_1000057392" description="Elongation factor G">
    <location>
        <begin position="1"/>
        <end position="702"/>
    </location>
</feature>
<feature type="domain" description="tr-type G">
    <location>
        <begin position="8"/>
        <end position="290"/>
    </location>
</feature>
<feature type="binding site" evidence="1">
    <location>
        <begin position="17"/>
        <end position="24"/>
    </location>
    <ligand>
        <name>GTP</name>
        <dbReference type="ChEBI" id="CHEBI:37565"/>
    </ligand>
</feature>
<feature type="binding site" evidence="1">
    <location>
        <begin position="88"/>
        <end position="92"/>
    </location>
    <ligand>
        <name>GTP</name>
        <dbReference type="ChEBI" id="CHEBI:37565"/>
    </ligand>
</feature>
<feature type="binding site" evidence="1">
    <location>
        <begin position="142"/>
        <end position="145"/>
    </location>
    <ligand>
        <name>GTP</name>
        <dbReference type="ChEBI" id="CHEBI:37565"/>
    </ligand>
</feature>
<organism>
    <name type="scientific">Yersinia pseudotuberculosis serotype O:1b (strain IP 31758)</name>
    <dbReference type="NCBI Taxonomy" id="349747"/>
    <lineage>
        <taxon>Bacteria</taxon>
        <taxon>Pseudomonadati</taxon>
        <taxon>Pseudomonadota</taxon>
        <taxon>Gammaproteobacteria</taxon>
        <taxon>Enterobacterales</taxon>
        <taxon>Yersiniaceae</taxon>
        <taxon>Yersinia</taxon>
    </lineage>
</organism>
<comment type="function">
    <text evidence="1">Catalyzes the GTP-dependent ribosomal translocation step during translation elongation. During this step, the ribosome changes from the pre-translocational (PRE) to the post-translocational (POST) state as the newly formed A-site-bound peptidyl-tRNA and P-site-bound deacylated tRNA move to the P and E sites, respectively. Catalyzes the coordinated movement of the two tRNA molecules, the mRNA and conformational changes in the ribosome.</text>
</comment>
<comment type="subcellular location">
    <subcellularLocation>
        <location evidence="1">Cytoplasm</location>
    </subcellularLocation>
</comment>
<comment type="similarity">
    <text evidence="1">Belongs to the TRAFAC class translation factor GTPase superfamily. Classic translation factor GTPase family. EF-G/EF-2 subfamily.</text>
</comment>
<protein>
    <recommendedName>
        <fullName evidence="1">Elongation factor G</fullName>
        <shortName evidence="1">EF-G</shortName>
    </recommendedName>
</protein>
<reference key="1">
    <citation type="journal article" date="2007" name="PLoS Genet.">
        <title>The complete genome sequence of Yersinia pseudotuberculosis IP31758, the causative agent of Far East scarlet-like fever.</title>
        <authorList>
            <person name="Eppinger M."/>
            <person name="Rosovitz M.J."/>
            <person name="Fricke W.F."/>
            <person name="Rasko D.A."/>
            <person name="Kokorina G."/>
            <person name="Fayolle C."/>
            <person name="Lindler L.E."/>
            <person name="Carniel E."/>
            <person name="Ravel J."/>
        </authorList>
    </citation>
    <scope>NUCLEOTIDE SEQUENCE [LARGE SCALE GENOMIC DNA]</scope>
    <source>
        <strain>IP 31758</strain>
    </source>
</reference>
<gene>
    <name evidence="1" type="primary">fusA</name>
    <name type="ordered locus">YpsIP31758_3919</name>
</gene>
<dbReference type="EMBL" id="CP000720">
    <property type="protein sequence ID" value="ABS49423.1"/>
    <property type="molecule type" value="Genomic_DNA"/>
</dbReference>
<dbReference type="RefSeq" id="WP_002212325.1">
    <property type="nucleotide sequence ID" value="NC_009708.1"/>
</dbReference>
<dbReference type="SMR" id="A7FNN9"/>
<dbReference type="GeneID" id="96663201"/>
<dbReference type="KEGG" id="ypi:YpsIP31758_3919"/>
<dbReference type="HOGENOM" id="CLU_002794_4_1_6"/>
<dbReference type="Proteomes" id="UP000002412">
    <property type="component" value="Chromosome"/>
</dbReference>
<dbReference type="GO" id="GO:0005737">
    <property type="term" value="C:cytoplasm"/>
    <property type="evidence" value="ECO:0007669"/>
    <property type="project" value="UniProtKB-SubCell"/>
</dbReference>
<dbReference type="GO" id="GO:0005525">
    <property type="term" value="F:GTP binding"/>
    <property type="evidence" value="ECO:0007669"/>
    <property type="project" value="UniProtKB-UniRule"/>
</dbReference>
<dbReference type="GO" id="GO:0003924">
    <property type="term" value="F:GTPase activity"/>
    <property type="evidence" value="ECO:0007669"/>
    <property type="project" value="InterPro"/>
</dbReference>
<dbReference type="GO" id="GO:0097216">
    <property type="term" value="F:guanosine tetraphosphate binding"/>
    <property type="evidence" value="ECO:0007669"/>
    <property type="project" value="UniProtKB-ARBA"/>
</dbReference>
<dbReference type="GO" id="GO:0003746">
    <property type="term" value="F:translation elongation factor activity"/>
    <property type="evidence" value="ECO:0007669"/>
    <property type="project" value="UniProtKB-UniRule"/>
</dbReference>
<dbReference type="GO" id="GO:0032790">
    <property type="term" value="P:ribosome disassembly"/>
    <property type="evidence" value="ECO:0007669"/>
    <property type="project" value="TreeGrafter"/>
</dbReference>
<dbReference type="CDD" id="cd01886">
    <property type="entry name" value="EF-G"/>
    <property type="match status" value="1"/>
</dbReference>
<dbReference type="CDD" id="cd16262">
    <property type="entry name" value="EFG_III"/>
    <property type="match status" value="1"/>
</dbReference>
<dbReference type="CDD" id="cd01434">
    <property type="entry name" value="EFG_mtEFG1_IV"/>
    <property type="match status" value="1"/>
</dbReference>
<dbReference type="CDD" id="cd03713">
    <property type="entry name" value="EFG_mtEFG_C"/>
    <property type="match status" value="1"/>
</dbReference>
<dbReference type="CDD" id="cd04088">
    <property type="entry name" value="EFG_mtEFG_II"/>
    <property type="match status" value="1"/>
</dbReference>
<dbReference type="FunFam" id="2.40.30.10:FF:000006">
    <property type="entry name" value="Elongation factor G"/>
    <property type="match status" value="1"/>
</dbReference>
<dbReference type="FunFam" id="3.30.230.10:FF:000003">
    <property type="entry name" value="Elongation factor G"/>
    <property type="match status" value="1"/>
</dbReference>
<dbReference type="FunFam" id="3.30.70.240:FF:000001">
    <property type="entry name" value="Elongation factor G"/>
    <property type="match status" value="1"/>
</dbReference>
<dbReference type="FunFam" id="3.30.70.870:FF:000001">
    <property type="entry name" value="Elongation factor G"/>
    <property type="match status" value="1"/>
</dbReference>
<dbReference type="FunFam" id="3.40.50.300:FF:000029">
    <property type="entry name" value="Elongation factor G"/>
    <property type="match status" value="1"/>
</dbReference>
<dbReference type="Gene3D" id="3.30.230.10">
    <property type="match status" value="1"/>
</dbReference>
<dbReference type="Gene3D" id="3.30.70.240">
    <property type="match status" value="1"/>
</dbReference>
<dbReference type="Gene3D" id="3.30.70.870">
    <property type="entry name" value="Elongation Factor G (Translational Gtpase), domain 3"/>
    <property type="match status" value="1"/>
</dbReference>
<dbReference type="Gene3D" id="3.40.50.300">
    <property type="entry name" value="P-loop containing nucleotide triphosphate hydrolases"/>
    <property type="match status" value="1"/>
</dbReference>
<dbReference type="Gene3D" id="2.40.30.10">
    <property type="entry name" value="Translation factors"/>
    <property type="match status" value="1"/>
</dbReference>
<dbReference type="HAMAP" id="MF_00054_B">
    <property type="entry name" value="EF_G_EF_2_B"/>
    <property type="match status" value="1"/>
</dbReference>
<dbReference type="InterPro" id="IPR041095">
    <property type="entry name" value="EFG_II"/>
</dbReference>
<dbReference type="InterPro" id="IPR009022">
    <property type="entry name" value="EFG_III"/>
</dbReference>
<dbReference type="InterPro" id="IPR035647">
    <property type="entry name" value="EFG_III/V"/>
</dbReference>
<dbReference type="InterPro" id="IPR047872">
    <property type="entry name" value="EFG_IV"/>
</dbReference>
<dbReference type="InterPro" id="IPR035649">
    <property type="entry name" value="EFG_V"/>
</dbReference>
<dbReference type="InterPro" id="IPR000640">
    <property type="entry name" value="EFG_V-like"/>
</dbReference>
<dbReference type="InterPro" id="IPR004161">
    <property type="entry name" value="EFTu-like_2"/>
</dbReference>
<dbReference type="InterPro" id="IPR031157">
    <property type="entry name" value="G_TR_CS"/>
</dbReference>
<dbReference type="InterPro" id="IPR027417">
    <property type="entry name" value="P-loop_NTPase"/>
</dbReference>
<dbReference type="InterPro" id="IPR020568">
    <property type="entry name" value="Ribosomal_Su5_D2-typ_SF"/>
</dbReference>
<dbReference type="InterPro" id="IPR014721">
    <property type="entry name" value="Ribsml_uS5_D2-typ_fold_subgr"/>
</dbReference>
<dbReference type="InterPro" id="IPR005225">
    <property type="entry name" value="Small_GTP-bd"/>
</dbReference>
<dbReference type="InterPro" id="IPR000795">
    <property type="entry name" value="T_Tr_GTP-bd_dom"/>
</dbReference>
<dbReference type="InterPro" id="IPR009000">
    <property type="entry name" value="Transl_B-barrel_sf"/>
</dbReference>
<dbReference type="InterPro" id="IPR004540">
    <property type="entry name" value="Transl_elong_EFG/EF2"/>
</dbReference>
<dbReference type="InterPro" id="IPR005517">
    <property type="entry name" value="Transl_elong_EFG/EF2_IV"/>
</dbReference>
<dbReference type="NCBIfam" id="TIGR00484">
    <property type="entry name" value="EF-G"/>
    <property type="match status" value="1"/>
</dbReference>
<dbReference type="NCBIfam" id="NF009381">
    <property type="entry name" value="PRK12740.1-5"/>
    <property type="match status" value="1"/>
</dbReference>
<dbReference type="NCBIfam" id="TIGR00231">
    <property type="entry name" value="small_GTP"/>
    <property type="match status" value="1"/>
</dbReference>
<dbReference type="PANTHER" id="PTHR43261:SF1">
    <property type="entry name" value="RIBOSOME-RELEASING FACTOR 2, MITOCHONDRIAL"/>
    <property type="match status" value="1"/>
</dbReference>
<dbReference type="PANTHER" id="PTHR43261">
    <property type="entry name" value="TRANSLATION ELONGATION FACTOR G-RELATED"/>
    <property type="match status" value="1"/>
</dbReference>
<dbReference type="Pfam" id="PF00679">
    <property type="entry name" value="EFG_C"/>
    <property type="match status" value="1"/>
</dbReference>
<dbReference type="Pfam" id="PF14492">
    <property type="entry name" value="EFG_III"/>
    <property type="match status" value="1"/>
</dbReference>
<dbReference type="Pfam" id="PF03764">
    <property type="entry name" value="EFG_IV"/>
    <property type="match status" value="1"/>
</dbReference>
<dbReference type="Pfam" id="PF00009">
    <property type="entry name" value="GTP_EFTU"/>
    <property type="match status" value="1"/>
</dbReference>
<dbReference type="Pfam" id="PF03144">
    <property type="entry name" value="GTP_EFTU_D2"/>
    <property type="match status" value="1"/>
</dbReference>
<dbReference type="PRINTS" id="PR00315">
    <property type="entry name" value="ELONGATNFCT"/>
</dbReference>
<dbReference type="SMART" id="SM00838">
    <property type="entry name" value="EFG_C"/>
    <property type="match status" value="1"/>
</dbReference>
<dbReference type="SMART" id="SM00889">
    <property type="entry name" value="EFG_IV"/>
    <property type="match status" value="1"/>
</dbReference>
<dbReference type="SUPFAM" id="SSF54980">
    <property type="entry name" value="EF-G C-terminal domain-like"/>
    <property type="match status" value="2"/>
</dbReference>
<dbReference type="SUPFAM" id="SSF52540">
    <property type="entry name" value="P-loop containing nucleoside triphosphate hydrolases"/>
    <property type="match status" value="1"/>
</dbReference>
<dbReference type="SUPFAM" id="SSF54211">
    <property type="entry name" value="Ribosomal protein S5 domain 2-like"/>
    <property type="match status" value="1"/>
</dbReference>
<dbReference type="SUPFAM" id="SSF50447">
    <property type="entry name" value="Translation proteins"/>
    <property type="match status" value="1"/>
</dbReference>
<dbReference type="PROSITE" id="PS00301">
    <property type="entry name" value="G_TR_1"/>
    <property type="match status" value="1"/>
</dbReference>
<dbReference type="PROSITE" id="PS51722">
    <property type="entry name" value="G_TR_2"/>
    <property type="match status" value="1"/>
</dbReference>
<evidence type="ECO:0000255" key="1">
    <source>
        <dbReference type="HAMAP-Rule" id="MF_00054"/>
    </source>
</evidence>
<sequence>MARKTPIERYRNIGISAHIDAGKTTTTERILFYTGVNHKIGEVHDGAATMDWMEQEQERGITITSAATTCFWSGMAKQFEPHHVNIIDTPGHVDFTIEVERSMRVLDGAVMVYCAVGGVQPQSETVWRQANKYKVPRIAFVNKMDRMGANFLRVVGQLKSRLGANPVPLQLAIGAEEKFTGIIDLVKMKAINWNEADQGVTFEYEEIPADMAELAAEWHQNLVESAAEASDELMDKYLGGEELTEEEIKKALRQRVLKSEIILVTCGSAFKNKGVQAMLDAVIEYLPAPTDVESINGILDDGKDTPAVRHSDDKEPFSALAFKIATDPFVGNLTFFRVYSGIVNSGDTVLNSVKSQRERLGRIVQMHANKREEIKEVHAGDIAAAIGLKDVTTGDTLCDPNNPIILERMEFPEPVISVAVEPKTKADQEKMGMALGRLAKEDPSFRVWTDEESGQTIIAGMGELHLDILVDRMRREFNVEANVGKPQVAYRETIRETVKDVEGKHAKQSGGRGQYGHVVIDMSPLPPGGVGYEFVNEIVGGSIPKEFIPAVDKGIQEQLKSGPLAGYPVVDVKVRLHYGSYHDVDSSELAFKLAGSIAFKEGFKRAKPVLLEPIMKVEVETPEDYMGDVMGDLNRRRGIIEGMEDTATGKTVRVKVPLSEMFGYATDLRSQTQGRASYSMEFLEYAEAPSNVAKAVIEARGK</sequence>
<accession>A7FNN9</accession>
<proteinExistence type="inferred from homology"/>